<dbReference type="EC" id="3.6.5.-" evidence="1"/>
<dbReference type="EMBL" id="X07716">
    <property type="protein sequence ID" value="CAA30544.1"/>
    <property type="molecule type" value="Genomic_DNA"/>
</dbReference>
<dbReference type="PIR" id="S03409">
    <property type="entry name" value="S03409"/>
</dbReference>
<dbReference type="SMR" id="P10489"/>
<dbReference type="GO" id="GO:0005737">
    <property type="term" value="C:cytoplasm"/>
    <property type="evidence" value="ECO:0007669"/>
    <property type="project" value="UniProtKB-KW"/>
</dbReference>
<dbReference type="GO" id="GO:0005874">
    <property type="term" value="C:microtubule"/>
    <property type="evidence" value="ECO:0007669"/>
    <property type="project" value="UniProtKB-KW"/>
</dbReference>
<dbReference type="GO" id="GO:0005525">
    <property type="term" value="F:GTP binding"/>
    <property type="evidence" value="ECO:0007669"/>
    <property type="project" value="UniProtKB-KW"/>
</dbReference>
<dbReference type="GO" id="GO:0016787">
    <property type="term" value="F:hydrolase activity"/>
    <property type="evidence" value="ECO:0007669"/>
    <property type="project" value="UniProtKB-KW"/>
</dbReference>
<dbReference type="Gene3D" id="3.40.50.1440">
    <property type="entry name" value="Tubulin/FtsZ, GTPase domain"/>
    <property type="match status" value="1"/>
</dbReference>
<dbReference type="InterPro" id="IPR036525">
    <property type="entry name" value="Tubulin/FtsZ_GTPase_sf"/>
</dbReference>
<dbReference type="SUPFAM" id="SSF52490">
    <property type="entry name" value="Tubulin nucleotide-binding domain-like"/>
    <property type="match status" value="1"/>
</dbReference>
<keyword id="KW-0963">Cytoplasm</keyword>
<keyword id="KW-0206">Cytoskeleton</keyword>
<keyword id="KW-0342">GTP-binding</keyword>
<keyword id="KW-0378">Hydrolase</keyword>
<keyword id="KW-0493">Microtubule</keyword>
<keyword id="KW-0547">Nucleotide-binding</keyword>
<name>TBA_LEPSE</name>
<evidence type="ECO:0000250" key="1">
    <source>
        <dbReference type="UniProtKB" id="P68363"/>
    </source>
</evidence>
<evidence type="ECO:0000305" key="2"/>
<proteinExistence type="inferred from homology"/>
<reference key="1">
    <citation type="journal article" date="1988" name="Nucleic Acids Res.">
        <title>Characterization of RNA transcripts from the alpha tubulin gene cluster of Leptomonas seymouri.</title>
        <authorList>
            <person name="Bellofatto V."/>
            <person name="Cross G.A.M."/>
        </authorList>
    </citation>
    <scope>NUCLEOTIDE SEQUENCE [GENOMIC DNA]</scope>
</reference>
<comment type="function">
    <text>Tubulin is the major constituent of microtubules, a cylinder consisting of laterally associated linear protofilaments composed of alpha- and beta-tubulin heterodimers. Microtubules grow by the addition of GTP-tubulin dimers to the microtubule end, where a stabilizing cap forms. Below the cap, tubulin dimers are in GDP-bound state, owing to GTPase activity of alpha-tubulin.</text>
</comment>
<comment type="catalytic activity">
    <reaction evidence="1">
        <text>GTP + H2O = GDP + phosphate + H(+)</text>
        <dbReference type="Rhea" id="RHEA:19669"/>
        <dbReference type="ChEBI" id="CHEBI:15377"/>
        <dbReference type="ChEBI" id="CHEBI:15378"/>
        <dbReference type="ChEBI" id="CHEBI:37565"/>
        <dbReference type="ChEBI" id="CHEBI:43474"/>
        <dbReference type="ChEBI" id="CHEBI:58189"/>
    </reaction>
    <physiologicalReaction direction="left-to-right" evidence="1">
        <dbReference type="Rhea" id="RHEA:19670"/>
    </physiologicalReaction>
</comment>
<comment type="cofactor">
    <cofactor evidence="1">
        <name>Mg(2+)</name>
        <dbReference type="ChEBI" id="CHEBI:18420"/>
    </cofactor>
</comment>
<comment type="subunit">
    <text>Dimer of alpha and beta chains. A typical microtubule is a hollow water-filled tube with an outer diameter of 25 nm and an inner diameter of 15 nM. Alpha-beta heterodimers associate head-to-tail to form protofilaments running lengthwise along the microtubule wall with the beta-tubulin subunit facing the microtubule plus end conferring a structural polarity. Microtubules usually have 13 protofilaments but different protofilament numbers can be found in some organisms and specialized cells.</text>
</comment>
<comment type="subcellular location">
    <subcellularLocation>
        <location>Cytoplasm</location>
        <location>Cytoskeleton</location>
    </subcellularLocation>
</comment>
<comment type="similarity">
    <text evidence="2">Belongs to the tubulin family.</text>
</comment>
<sequence>MREAICIHIGQAGYQIGNACSQLFC</sequence>
<feature type="chain" id="PRO_0000048186" description="Tubulin alpha chain">
    <location>
        <begin position="1"/>
        <end position="25" status="greater than"/>
    </location>
</feature>
<feature type="binding site" evidence="1">
    <location>
        <position position="11"/>
    </location>
    <ligand>
        <name>GTP</name>
        <dbReference type="ChEBI" id="CHEBI:37565"/>
    </ligand>
</feature>
<feature type="non-terminal residue">
    <location>
        <position position="25"/>
    </location>
</feature>
<protein>
    <recommendedName>
        <fullName>Tubulin alpha chain</fullName>
        <ecNumber evidence="1">3.6.5.-</ecNumber>
    </recommendedName>
</protein>
<accession>P10489</accession>
<organism>
    <name type="scientific">Leptomonas seymouri</name>
    <dbReference type="NCBI Taxonomy" id="5684"/>
    <lineage>
        <taxon>Eukaryota</taxon>
        <taxon>Discoba</taxon>
        <taxon>Euglenozoa</taxon>
        <taxon>Kinetoplastea</taxon>
        <taxon>Metakinetoplastina</taxon>
        <taxon>Trypanosomatida</taxon>
        <taxon>Trypanosomatidae</taxon>
        <taxon>Leishmaniinae</taxon>
        <taxon>Leptomonas</taxon>
    </lineage>
</organism>